<accession>A7F8K7</accession>
<reference key="1">
    <citation type="journal article" date="2011" name="PLoS Genet.">
        <title>Genomic analysis of the necrotrophic fungal pathogens Sclerotinia sclerotiorum and Botrytis cinerea.</title>
        <authorList>
            <person name="Amselem J."/>
            <person name="Cuomo C.A."/>
            <person name="van Kan J.A.L."/>
            <person name="Viaud M."/>
            <person name="Benito E.P."/>
            <person name="Couloux A."/>
            <person name="Coutinho P.M."/>
            <person name="de Vries R.P."/>
            <person name="Dyer P.S."/>
            <person name="Fillinger S."/>
            <person name="Fournier E."/>
            <person name="Gout L."/>
            <person name="Hahn M."/>
            <person name="Kohn L."/>
            <person name="Lapalu N."/>
            <person name="Plummer K.M."/>
            <person name="Pradier J.-M."/>
            <person name="Quevillon E."/>
            <person name="Sharon A."/>
            <person name="Simon A."/>
            <person name="ten Have A."/>
            <person name="Tudzynski B."/>
            <person name="Tudzynski P."/>
            <person name="Wincker P."/>
            <person name="Andrew M."/>
            <person name="Anthouard V."/>
            <person name="Beever R.E."/>
            <person name="Beffa R."/>
            <person name="Benoit I."/>
            <person name="Bouzid O."/>
            <person name="Brault B."/>
            <person name="Chen Z."/>
            <person name="Choquer M."/>
            <person name="Collemare J."/>
            <person name="Cotton P."/>
            <person name="Danchin E.G."/>
            <person name="Da Silva C."/>
            <person name="Gautier A."/>
            <person name="Giraud C."/>
            <person name="Giraud T."/>
            <person name="Gonzalez C."/>
            <person name="Grossetete S."/>
            <person name="Gueldener U."/>
            <person name="Henrissat B."/>
            <person name="Howlett B.J."/>
            <person name="Kodira C."/>
            <person name="Kretschmer M."/>
            <person name="Lappartient A."/>
            <person name="Leroch M."/>
            <person name="Levis C."/>
            <person name="Mauceli E."/>
            <person name="Neuveglise C."/>
            <person name="Oeser B."/>
            <person name="Pearson M."/>
            <person name="Poulain J."/>
            <person name="Poussereau N."/>
            <person name="Quesneville H."/>
            <person name="Rascle C."/>
            <person name="Schumacher J."/>
            <person name="Segurens B."/>
            <person name="Sexton A."/>
            <person name="Silva E."/>
            <person name="Sirven C."/>
            <person name="Soanes D.M."/>
            <person name="Talbot N.J."/>
            <person name="Templeton M."/>
            <person name="Yandava C."/>
            <person name="Yarden O."/>
            <person name="Zeng Q."/>
            <person name="Rollins J.A."/>
            <person name="Lebrun M.-H."/>
            <person name="Dickman M."/>
        </authorList>
    </citation>
    <scope>NUCLEOTIDE SEQUENCE [LARGE SCALE GENOMIC DNA]</scope>
    <source>
        <strain>ATCC 18683 / 1980 / Ss-1</strain>
    </source>
</reference>
<organism>
    <name type="scientific">Sclerotinia sclerotiorum (strain ATCC 18683 / 1980 / Ss-1)</name>
    <name type="common">White mold</name>
    <name type="synonym">Whetzelinia sclerotiorum</name>
    <dbReference type="NCBI Taxonomy" id="665079"/>
    <lineage>
        <taxon>Eukaryota</taxon>
        <taxon>Fungi</taxon>
        <taxon>Dikarya</taxon>
        <taxon>Ascomycota</taxon>
        <taxon>Pezizomycotina</taxon>
        <taxon>Leotiomycetes</taxon>
        <taxon>Helotiales</taxon>
        <taxon>Sclerotiniaceae</taxon>
        <taxon>Sclerotinia</taxon>
    </lineage>
</organism>
<protein>
    <recommendedName>
        <fullName evidence="2">Eukaryotic translation initiation factor 3 subunit D</fullName>
        <shortName evidence="2">eIF3d</shortName>
    </recommendedName>
</protein>
<comment type="function">
    <text evidence="2">mRNA cap-binding component of the eukaryotic translation initiation factor 3 (eIF-3) complex, which is involved in protein synthesis of a specialized repertoire of mRNAs and, together with other initiation factors, stimulates binding of mRNA and methionyl-tRNAi to the 40S ribosome. The eIF-3 complex specifically targets and initiates translation of a subset of mRNAs involved in cell proliferation. In the eIF-3 complex, eif3d specifically recognizes and binds the 7-methylguanosine cap of a subset of mRNAs.</text>
</comment>
<comment type="subunit">
    <text evidence="2">Component of the eukaryotic translation initiation factor 3 (eIF-3) complex.</text>
</comment>
<comment type="subcellular location">
    <subcellularLocation>
        <location evidence="2">Cytoplasm</location>
    </subcellularLocation>
</comment>
<comment type="domain">
    <text evidence="2">The RNA gate region regulates mRNA cap recognition to prevent promiscuous mRNA-binding before assembly of eif3d into the full eukaryotic translation initiation factor 3 (eIF-3) complex.</text>
</comment>
<comment type="similarity">
    <text evidence="2">Belongs to the eIF-3 subunit D family.</text>
</comment>
<dbReference type="EMBL" id="CH476648">
    <property type="protein sequence ID" value="EDN99078.1"/>
    <property type="molecule type" value="Genomic_DNA"/>
</dbReference>
<dbReference type="RefSeq" id="XP_001585078.1">
    <property type="nucleotide sequence ID" value="XM_001585028.1"/>
</dbReference>
<dbReference type="SMR" id="A7F8K7"/>
<dbReference type="STRING" id="665079.A7F8K7"/>
<dbReference type="GeneID" id="5481166"/>
<dbReference type="KEGG" id="ssl:SS1G_13938"/>
<dbReference type="VEuPathDB" id="FungiDB:sscle_11g086090"/>
<dbReference type="InParanoid" id="A7F8K7"/>
<dbReference type="OMA" id="FMDKRDN"/>
<dbReference type="OrthoDB" id="16538at2759"/>
<dbReference type="Proteomes" id="UP000001312">
    <property type="component" value="Unassembled WGS sequence"/>
</dbReference>
<dbReference type="GO" id="GO:0016282">
    <property type="term" value="C:eukaryotic 43S preinitiation complex"/>
    <property type="evidence" value="ECO:0007669"/>
    <property type="project" value="UniProtKB-UniRule"/>
</dbReference>
<dbReference type="GO" id="GO:0033290">
    <property type="term" value="C:eukaryotic 48S preinitiation complex"/>
    <property type="evidence" value="ECO:0007669"/>
    <property type="project" value="UniProtKB-UniRule"/>
</dbReference>
<dbReference type="GO" id="GO:0005852">
    <property type="term" value="C:eukaryotic translation initiation factor 3 complex"/>
    <property type="evidence" value="ECO:0000318"/>
    <property type="project" value="GO_Central"/>
</dbReference>
<dbReference type="GO" id="GO:0098808">
    <property type="term" value="F:mRNA cap binding"/>
    <property type="evidence" value="ECO:0007669"/>
    <property type="project" value="UniProtKB-UniRule"/>
</dbReference>
<dbReference type="GO" id="GO:0003743">
    <property type="term" value="F:translation initiation factor activity"/>
    <property type="evidence" value="ECO:0000318"/>
    <property type="project" value="GO_Central"/>
</dbReference>
<dbReference type="GO" id="GO:0002191">
    <property type="term" value="P:cap-dependent translational initiation"/>
    <property type="evidence" value="ECO:0007669"/>
    <property type="project" value="UniProtKB-UniRule"/>
</dbReference>
<dbReference type="GO" id="GO:0001732">
    <property type="term" value="P:formation of cytoplasmic translation initiation complex"/>
    <property type="evidence" value="ECO:0007669"/>
    <property type="project" value="UniProtKB-UniRule"/>
</dbReference>
<dbReference type="GO" id="GO:0006413">
    <property type="term" value="P:translational initiation"/>
    <property type="evidence" value="ECO:0000318"/>
    <property type="project" value="GO_Central"/>
</dbReference>
<dbReference type="HAMAP" id="MF_03003">
    <property type="entry name" value="eIF3d"/>
    <property type="match status" value="1"/>
</dbReference>
<dbReference type="InterPro" id="IPR007783">
    <property type="entry name" value="eIF3d"/>
</dbReference>
<dbReference type="PANTHER" id="PTHR12399">
    <property type="entry name" value="EUKARYOTIC TRANSLATION INITIATION FACTOR 3 SUBUNIT 7"/>
    <property type="match status" value="1"/>
</dbReference>
<dbReference type="PANTHER" id="PTHR12399:SF0">
    <property type="entry name" value="EUKARYOTIC TRANSLATION INITIATION FACTOR 3 SUBUNIT D"/>
    <property type="match status" value="1"/>
</dbReference>
<dbReference type="Pfam" id="PF05091">
    <property type="entry name" value="eIF-3_zeta"/>
    <property type="match status" value="1"/>
</dbReference>
<dbReference type="PIRSF" id="PIRSF016281">
    <property type="entry name" value="EIF-3_zeta"/>
    <property type="match status" value="1"/>
</dbReference>
<feature type="chain" id="PRO_0000366888" description="Eukaryotic translation initiation factor 3 subunit D">
    <location>
        <begin position="1"/>
        <end position="577"/>
    </location>
</feature>
<feature type="region of interest" description="Disordered" evidence="3">
    <location>
        <begin position="103"/>
        <end position="177"/>
    </location>
</feature>
<feature type="region of interest" description="RNA gate" evidence="1">
    <location>
        <begin position="305"/>
        <end position="319"/>
    </location>
</feature>
<feature type="region of interest" description="Disordered" evidence="3">
    <location>
        <begin position="558"/>
        <end position="577"/>
    </location>
</feature>
<feature type="compositionally biased region" description="Basic and acidic residues" evidence="3">
    <location>
        <begin position="166"/>
        <end position="177"/>
    </location>
</feature>
<feature type="compositionally biased region" description="Acidic residues" evidence="3">
    <location>
        <begin position="560"/>
        <end position="577"/>
    </location>
</feature>
<gene>
    <name type="ORF">SS1G_13938</name>
</gene>
<proteinExistence type="inferred from homology"/>
<keyword id="KW-0963">Cytoplasm</keyword>
<keyword id="KW-0396">Initiation factor</keyword>
<keyword id="KW-0648">Protein biosynthesis</keyword>
<keyword id="KW-1185">Reference proteome</keyword>
<keyword id="KW-0694">RNA-binding</keyword>
<evidence type="ECO:0000250" key="1">
    <source>
        <dbReference type="UniProtKB" id="K7IM66"/>
    </source>
</evidence>
<evidence type="ECO:0000255" key="2">
    <source>
        <dbReference type="HAMAP-Rule" id="MF_03003"/>
    </source>
</evidence>
<evidence type="ECO:0000256" key="3">
    <source>
        <dbReference type="SAM" id="MobiDB-lite"/>
    </source>
</evidence>
<sequence>MAPISLSEIISALPSEDSWGPTTTSETTLNGVPYAPYSKGDKLGRMADWTAEGKDGRDGRGGRQQYNRNYRDQQVYGAGTSSLFAVQLAEDESTFSVVSNTRDSTKTRFGRGGTFTRGRGQRGGRADTRGGRGQFQRVGGRGGQQGYSSYDTRGGRGGARGGRKFGWKDYDKPQRNRDASVNIKPDWKMLEEIDFNRLAKLNLDTDDGEDIDSYGFLYYYDRAFDKQPVKAAERKLNVVDRASYNVTTSSDPVIQELAEKDEATIFATDSILSMLMCSPRSVYPWDIVIVRQGNKVFLDKRDNATLDMVTVNENAADAPMDASEGSKDAINQPSALAEEATYINHNFANQVMKESDSQKVEMEHENPFYNPSEETDPPASKAYKYRKFDLSLNDEDPVHLVVRTEIDAVSKNAISGEDQYLTVKALNEFDSKAQGSGGALDWRTKLVSQRGAVVATEMKNNSCKLARWTVQSIIAKADVMKLGFVSRANPKLNDRHVILGVIGWKPRDFASQMNLSLSNGWGIVRTIVDMCLKREEGKYVLVKDPNKPILRLYQVPAGSFEDDGEGDVIEENVEEED</sequence>
<name>EIF3D_SCLS1</name>